<accession>C1L2D9</accession>
<sequence length="603" mass="69374">MSSEHIQNKLALLPDQPGCYLMKDRQGTIIYVGKAKILKNRVRSYFSGTHDSKTQRLVQEIVDFEYIVTSSNVEALLLEINLIKKHDPRFNIRLKDDKTYPFIKITNERHPRLIITRQVKKDKGKYFGPYPNVYAANEVKRILDRLYPLRKCSTLPNKVCLYYHLGQCLAPCVFDVEASKYKEMQDEIVAFLNGGYKTVKNDLMKKMQEAAENMEFEKAGEFRDQINAIETTMEKQKMTMNDFVDRDVFGYAIDKGWMCVQVFFIRQGKLIERDVSQFPFYNDADEDFLTFIGQFYQKANHIPPKEIYLPDDVDSEAVQAVVPDTKIIVPQRGNKKDLVKLAYKNAKIALNEKFMLLERNEERTVGAVERLGEAMGIPTPSRVEAFDNSNIHGTDPVSAMVTFLDGKPSKNDYRKYKIKTVEGPDDYATMREVIRRRYWRVLKEELPMPDLILIDGGKGQIDSAKDVLTNELGLDIPVAGLAKDDKHRTSQLLFGDPLEIVPLERNSQEFYLLQRMQDEVHRFAITFHRQLRSKTGFQSILDGIPGVGPGRKKKLLKHFGSMKKLKEASVEEIKEAGVPLNVAEEVHKHITAFNEKAKNTEQK</sequence>
<name>UVRC_LISMC</name>
<keyword id="KW-0963">Cytoplasm</keyword>
<keyword id="KW-0227">DNA damage</keyword>
<keyword id="KW-0228">DNA excision</keyword>
<keyword id="KW-0234">DNA repair</keyword>
<keyword id="KW-0267">Excision nuclease</keyword>
<keyword id="KW-0742">SOS response</keyword>
<reference key="1">
    <citation type="journal article" date="2012" name="BMC Genomics">
        <title>Comparative genomics and transcriptomics of lineages I, II, and III strains of Listeria monocytogenes.</title>
        <authorList>
            <person name="Hain T."/>
            <person name="Ghai R."/>
            <person name="Billion A."/>
            <person name="Kuenne C.T."/>
            <person name="Steinweg C."/>
            <person name="Izar B."/>
            <person name="Mohamed W."/>
            <person name="Mraheil M."/>
            <person name="Domann E."/>
            <person name="Schaffrath S."/>
            <person name="Karst U."/>
            <person name="Goesmann A."/>
            <person name="Oehm S."/>
            <person name="Puhler A."/>
            <person name="Merkl R."/>
            <person name="Vorwerk S."/>
            <person name="Glaser P."/>
            <person name="Garrido P."/>
            <person name="Rusniok C."/>
            <person name="Buchrieser C."/>
            <person name="Goebel W."/>
            <person name="Chakraborty T."/>
        </authorList>
    </citation>
    <scope>NUCLEOTIDE SEQUENCE [LARGE SCALE GENOMIC DNA]</scope>
    <source>
        <strain>CLIP80459</strain>
    </source>
</reference>
<comment type="function">
    <text evidence="1">The UvrABC repair system catalyzes the recognition and processing of DNA lesions. UvrC both incises the 5' and 3' sides of the lesion. The N-terminal half is responsible for the 3' incision and the C-terminal half is responsible for the 5' incision.</text>
</comment>
<comment type="subunit">
    <text evidence="1">Interacts with UvrB in an incision complex.</text>
</comment>
<comment type="subcellular location">
    <subcellularLocation>
        <location evidence="1">Cytoplasm</location>
    </subcellularLocation>
</comment>
<comment type="similarity">
    <text evidence="1">Belongs to the UvrC family.</text>
</comment>
<proteinExistence type="inferred from homology"/>
<organism>
    <name type="scientific">Listeria monocytogenes serotype 4b (strain CLIP80459)</name>
    <dbReference type="NCBI Taxonomy" id="568819"/>
    <lineage>
        <taxon>Bacteria</taxon>
        <taxon>Bacillati</taxon>
        <taxon>Bacillota</taxon>
        <taxon>Bacilli</taxon>
        <taxon>Bacillales</taxon>
        <taxon>Listeriaceae</taxon>
        <taxon>Listeria</taxon>
    </lineage>
</organism>
<gene>
    <name evidence="1" type="primary">uvrC</name>
    <name type="ordered locus">Lm4b_01239</name>
</gene>
<dbReference type="EMBL" id="FM242711">
    <property type="protein sequence ID" value="CAS05005.1"/>
    <property type="molecule type" value="Genomic_DNA"/>
</dbReference>
<dbReference type="RefSeq" id="WP_003726544.1">
    <property type="nucleotide sequence ID" value="NC_012488.1"/>
</dbReference>
<dbReference type="SMR" id="C1L2D9"/>
<dbReference type="KEGG" id="lmc:Lm4b_01239"/>
<dbReference type="HOGENOM" id="CLU_014841_3_2_9"/>
<dbReference type="GO" id="GO:0005737">
    <property type="term" value="C:cytoplasm"/>
    <property type="evidence" value="ECO:0007669"/>
    <property type="project" value="UniProtKB-SubCell"/>
</dbReference>
<dbReference type="GO" id="GO:0009380">
    <property type="term" value="C:excinuclease repair complex"/>
    <property type="evidence" value="ECO:0007669"/>
    <property type="project" value="InterPro"/>
</dbReference>
<dbReference type="GO" id="GO:0003677">
    <property type="term" value="F:DNA binding"/>
    <property type="evidence" value="ECO:0007669"/>
    <property type="project" value="UniProtKB-UniRule"/>
</dbReference>
<dbReference type="GO" id="GO:0009381">
    <property type="term" value="F:excinuclease ABC activity"/>
    <property type="evidence" value="ECO:0007669"/>
    <property type="project" value="UniProtKB-UniRule"/>
</dbReference>
<dbReference type="GO" id="GO:0006289">
    <property type="term" value="P:nucleotide-excision repair"/>
    <property type="evidence" value="ECO:0007669"/>
    <property type="project" value="UniProtKB-UniRule"/>
</dbReference>
<dbReference type="GO" id="GO:0009432">
    <property type="term" value="P:SOS response"/>
    <property type="evidence" value="ECO:0007669"/>
    <property type="project" value="UniProtKB-UniRule"/>
</dbReference>
<dbReference type="CDD" id="cd10434">
    <property type="entry name" value="GIY-YIG_UvrC_Cho"/>
    <property type="match status" value="1"/>
</dbReference>
<dbReference type="FunFam" id="1.10.150.20:FF:000005">
    <property type="entry name" value="UvrABC system protein C"/>
    <property type="match status" value="1"/>
</dbReference>
<dbReference type="FunFam" id="3.30.420.340:FF:000002">
    <property type="entry name" value="UvrABC system protein C"/>
    <property type="match status" value="1"/>
</dbReference>
<dbReference type="FunFam" id="3.40.1440.10:FF:000001">
    <property type="entry name" value="UvrABC system protein C"/>
    <property type="match status" value="1"/>
</dbReference>
<dbReference type="FunFam" id="4.10.860.10:FF:000002">
    <property type="entry name" value="UvrABC system protein C"/>
    <property type="match status" value="1"/>
</dbReference>
<dbReference type="Gene3D" id="1.10.150.20">
    <property type="entry name" value="5' to 3' exonuclease, C-terminal subdomain"/>
    <property type="match status" value="1"/>
</dbReference>
<dbReference type="Gene3D" id="3.40.1440.10">
    <property type="entry name" value="GIY-YIG endonuclease"/>
    <property type="match status" value="1"/>
</dbReference>
<dbReference type="Gene3D" id="4.10.860.10">
    <property type="entry name" value="UVR domain"/>
    <property type="match status" value="1"/>
</dbReference>
<dbReference type="Gene3D" id="3.30.420.340">
    <property type="entry name" value="UvrC, RNAse H endonuclease domain"/>
    <property type="match status" value="1"/>
</dbReference>
<dbReference type="HAMAP" id="MF_00203">
    <property type="entry name" value="UvrC"/>
    <property type="match status" value="1"/>
</dbReference>
<dbReference type="InterPro" id="IPR041663">
    <property type="entry name" value="DisA/LigA_HHH"/>
</dbReference>
<dbReference type="InterPro" id="IPR000305">
    <property type="entry name" value="GIY-YIG_endonuc"/>
</dbReference>
<dbReference type="InterPro" id="IPR035901">
    <property type="entry name" value="GIY-YIG_endonuc_sf"/>
</dbReference>
<dbReference type="InterPro" id="IPR047296">
    <property type="entry name" value="GIY-YIG_UvrC_Cho"/>
</dbReference>
<dbReference type="InterPro" id="IPR010994">
    <property type="entry name" value="RuvA_2-like"/>
</dbReference>
<dbReference type="InterPro" id="IPR001943">
    <property type="entry name" value="UVR_dom"/>
</dbReference>
<dbReference type="InterPro" id="IPR036876">
    <property type="entry name" value="UVR_dom_sf"/>
</dbReference>
<dbReference type="InterPro" id="IPR050066">
    <property type="entry name" value="UvrABC_protein_C"/>
</dbReference>
<dbReference type="InterPro" id="IPR004791">
    <property type="entry name" value="UvrC"/>
</dbReference>
<dbReference type="InterPro" id="IPR001162">
    <property type="entry name" value="UvrC_RNase_H_dom"/>
</dbReference>
<dbReference type="InterPro" id="IPR038476">
    <property type="entry name" value="UvrC_RNase_H_dom_sf"/>
</dbReference>
<dbReference type="NCBIfam" id="TIGR00194">
    <property type="entry name" value="uvrC"/>
    <property type="match status" value="1"/>
</dbReference>
<dbReference type="PANTHER" id="PTHR30562:SF1">
    <property type="entry name" value="UVRABC SYSTEM PROTEIN C"/>
    <property type="match status" value="1"/>
</dbReference>
<dbReference type="PANTHER" id="PTHR30562">
    <property type="entry name" value="UVRC/OXIDOREDUCTASE"/>
    <property type="match status" value="1"/>
</dbReference>
<dbReference type="Pfam" id="PF01541">
    <property type="entry name" value="GIY-YIG"/>
    <property type="match status" value="1"/>
</dbReference>
<dbReference type="Pfam" id="PF12826">
    <property type="entry name" value="HHH_2"/>
    <property type="match status" value="1"/>
</dbReference>
<dbReference type="Pfam" id="PF02151">
    <property type="entry name" value="UVR"/>
    <property type="match status" value="1"/>
</dbReference>
<dbReference type="Pfam" id="PF22920">
    <property type="entry name" value="UvrC_RNaseH"/>
    <property type="match status" value="1"/>
</dbReference>
<dbReference type="Pfam" id="PF08459">
    <property type="entry name" value="UvrC_RNaseH_dom"/>
    <property type="match status" value="1"/>
</dbReference>
<dbReference type="SMART" id="SM00465">
    <property type="entry name" value="GIYc"/>
    <property type="match status" value="1"/>
</dbReference>
<dbReference type="SUPFAM" id="SSF46600">
    <property type="entry name" value="C-terminal UvrC-binding domain of UvrB"/>
    <property type="match status" value="1"/>
</dbReference>
<dbReference type="SUPFAM" id="SSF82771">
    <property type="entry name" value="GIY-YIG endonuclease"/>
    <property type="match status" value="1"/>
</dbReference>
<dbReference type="SUPFAM" id="SSF47781">
    <property type="entry name" value="RuvA domain 2-like"/>
    <property type="match status" value="1"/>
</dbReference>
<dbReference type="PROSITE" id="PS50164">
    <property type="entry name" value="GIY_YIG"/>
    <property type="match status" value="1"/>
</dbReference>
<dbReference type="PROSITE" id="PS50151">
    <property type="entry name" value="UVR"/>
    <property type="match status" value="1"/>
</dbReference>
<dbReference type="PROSITE" id="PS50165">
    <property type="entry name" value="UVRC"/>
    <property type="match status" value="1"/>
</dbReference>
<protein>
    <recommendedName>
        <fullName evidence="1">UvrABC system protein C</fullName>
        <shortName evidence="1">Protein UvrC</shortName>
    </recommendedName>
    <alternativeName>
        <fullName evidence="1">Excinuclease ABC subunit C</fullName>
    </alternativeName>
</protein>
<feature type="chain" id="PRO_1000204123" description="UvrABC system protein C">
    <location>
        <begin position="1"/>
        <end position="603"/>
    </location>
</feature>
<feature type="domain" description="GIY-YIG" evidence="1">
    <location>
        <begin position="15"/>
        <end position="92"/>
    </location>
</feature>
<feature type="domain" description="UVR" evidence="1">
    <location>
        <begin position="197"/>
        <end position="232"/>
    </location>
</feature>
<evidence type="ECO:0000255" key="1">
    <source>
        <dbReference type="HAMAP-Rule" id="MF_00203"/>
    </source>
</evidence>